<name>RL22_NATPD</name>
<gene>
    <name evidence="1" type="primary">rpl22</name>
    <name type="ordered locus">NP_4864A</name>
</gene>
<accession>Q3IMY3</accession>
<reference key="1">
    <citation type="journal article" date="2005" name="Genome Res.">
        <title>Living with two extremes: conclusions from the genome sequence of Natronomonas pharaonis.</title>
        <authorList>
            <person name="Falb M."/>
            <person name="Pfeiffer F."/>
            <person name="Palm P."/>
            <person name="Rodewald K."/>
            <person name="Hickmann V."/>
            <person name="Tittor J."/>
            <person name="Oesterhelt D."/>
        </authorList>
    </citation>
    <scope>NUCLEOTIDE SEQUENCE [LARGE SCALE GENOMIC DNA]</scope>
    <source>
        <strain>ATCC 35678 / DSM 2160 / CIP 103997 / JCM 8858 / NBRC 14720 / NCIMB 2260 / Gabara</strain>
    </source>
</reference>
<sequence length="154" mass="17076">MGISYSVDVDPDETAKAMLRERHMSHKHSKEIAREIKGKTAGEAVDYLEAVIDGDRSVPFKSHNTGVGHRNDIEGWDAGRYPEKASEAFLDLLENGINNADHQGFEGEEMVIEHVAAHKVGESPGQKPRAFGRASPWNTPQVDVELVLRTEDDE</sequence>
<evidence type="ECO:0000255" key="1">
    <source>
        <dbReference type="HAMAP-Rule" id="MF_01331"/>
    </source>
</evidence>
<evidence type="ECO:0000305" key="2"/>
<protein>
    <recommendedName>
        <fullName evidence="1">Large ribosomal subunit protein uL22</fullName>
    </recommendedName>
    <alternativeName>
        <fullName evidence="2">50S ribosomal protein L22</fullName>
    </alternativeName>
</protein>
<comment type="function">
    <text evidence="1">This protein binds specifically to 23S rRNA. It makes multiple contacts with different domains of the 23S rRNA in the assembled 50S subunit and ribosome.</text>
</comment>
<comment type="function">
    <text evidence="1">The globular domain of the protein is located near the polypeptide exit tunnel on the outside of the subunit, while an extended beta-hairpin is found that lines the wall of the exit tunnel in the center of the 70S ribosome.</text>
</comment>
<comment type="subunit">
    <text evidence="1">Part of the 50S ribosomal subunit.</text>
</comment>
<comment type="similarity">
    <text evidence="1">Belongs to the universal ribosomal protein uL22 family.</text>
</comment>
<organism>
    <name type="scientific">Natronomonas pharaonis (strain ATCC 35678 / DSM 2160 / CIP 103997 / JCM 8858 / NBRC 14720 / NCIMB 2260 / Gabara)</name>
    <name type="common">Halobacterium pharaonis</name>
    <dbReference type="NCBI Taxonomy" id="348780"/>
    <lineage>
        <taxon>Archaea</taxon>
        <taxon>Methanobacteriati</taxon>
        <taxon>Methanobacteriota</taxon>
        <taxon>Stenosarchaea group</taxon>
        <taxon>Halobacteria</taxon>
        <taxon>Halobacteriales</taxon>
        <taxon>Haloarculaceae</taxon>
        <taxon>Natronomonas</taxon>
    </lineage>
</organism>
<dbReference type="EMBL" id="CR936257">
    <property type="protein sequence ID" value="CAI50523.1"/>
    <property type="molecule type" value="Genomic_DNA"/>
</dbReference>
<dbReference type="RefSeq" id="WP_011324135.1">
    <property type="nucleotide sequence ID" value="NC_007426.1"/>
</dbReference>
<dbReference type="SMR" id="Q3IMY3"/>
<dbReference type="STRING" id="348780.NP_4864A"/>
<dbReference type="EnsemblBacteria" id="CAI50523">
    <property type="protein sequence ID" value="CAI50523"/>
    <property type="gene ID" value="NP_4864A"/>
</dbReference>
<dbReference type="GeneID" id="3703132"/>
<dbReference type="KEGG" id="nph:NP_4864A"/>
<dbReference type="eggNOG" id="arCOG04098">
    <property type="taxonomic scope" value="Archaea"/>
</dbReference>
<dbReference type="HOGENOM" id="CLU_083987_0_2_2"/>
<dbReference type="OrthoDB" id="314984at2157"/>
<dbReference type="Proteomes" id="UP000002698">
    <property type="component" value="Chromosome"/>
</dbReference>
<dbReference type="GO" id="GO:0022625">
    <property type="term" value="C:cytosolic large ribosomal subunit"/>
    <property type="evidence" value="ECO:0007669"/>
    <property type="project" value="TreeGrafter"/>
</dbReference>
<dbReference type="GO" id="GO:0019843">
    <property type="term" value="F:rRNA binding"/>
    <property type="evidence" value="ECO:0007669"/>
    <property type="project" value="UniProtKB-UniRule"/>
</dbReference>
<dbReference type="GO" id="GO:0003735">
    <property type="term" value="F:structural constituent of ribosome"/>
    <property type="evidence" value="ECO:0007669"/>
    <property type="project" value="InterPro"/>
</dbReference>
<dbReference type="GO" id="GO:0002181">
    <property type="term" value="P:cytoplasmic translation"/>
    <property type="evidence" value="ECO:0007669"/>
    <property type="project" value="TreeGrafter"/>
</dbReference>
<dbReference type="CDD" id="cd00336">
    <property type="entry name" value="Ribosomal_L22"/>
    <property type="match status" value="1"/>
</dbReference>
<dbReference type="Gene3D" id="3.90.470.10">
    <property type="entry name" value="Ribosomal protein L22/L17"/>
    <property type="match status" value="1"/>
</dbReference>
<dbReference type="HAMAP" id="MF_01331_A">
    <property type="entry name" value="Ribosomal_uL22_A"/>
    <property type="match status" value="1"/>
</dbReference>
<dbReference type="InterPro" id="IPR001063">
    <property type="entry name" value="Ribosomal_uL22"/>
</dbReference>
<dbReference type="InterPro" id="IPR005721">
    <property type="entry name" value="Ribosomal_uL22_euk/arc"/>
</dbReference>
<dbReference type="InterPro" id="IPR036394">
    <property type="entry name" value="Ribosomal_uL22_sf"/>
</dbReference>
<dbReference type="NCBIfam" id="NF003260">
    <property type="entry name" value="PRK04223.1"/>
    <property type="match status" value="1"/>
</dbReference>
<dbReference type="NCBIfam" id="TIGR01038">
    <property type="entry name" value="uL22_arch_euk"/>
    <property type="match status" value="1"/>
</dbReference>
<dbReference type="PANTHER" id="PTHR11593">
    <property type="entry name" value="60S RIBOSOMAL PROTEIN L17"/>
    <property type="match status" value="1"/>
</dbReference>
<dbReference type="PANTHER" id="PTHR11593:SF10">
    <property type="entry name" value="60S RIBOSOMAL PROTEIN L17"/>
    <property type="match status" value="1"/>
</dbReference>
<dbReference type="Pfam" id="PF00237">
    <property type="entry name" value="Ribosomal_L22"/>
    <property type="match status" value="1"/>
</dbReference>
<dbReference type="SUPFAM" id="SSF54843">
    <property type="entry name" value="Ribosomal protein L22"/>
    <property type="match status" value="1"/>
</dbReference>
<feature type="chain" id="PRO_0000243251" description="Large ribosomal subunit protein uL22">
    <location>
        <begin position="1"/>
        <end position="154"/>
    </location>
</feature>
<keyword id="KW-1185">Reference proteome</keyword>
<keyword id="KW-0687">Ribonucleoprotein</keyword>
<keyword id="KW-0689">Ribosomal protein</keyword>
<keyword id="KW-0694">RNA-binding</keyword>
<keyword id="KW-0699">rRNA-binding</keyword>
<proteinExistence type="inferred from homology"/>